<proteinExistence type="evidence at protein level"/>
<evidence type="ECO:0000250" key="1">
    <source>
        <dbReference type="UniProtKB" id="P05738"/>
    </source>
</evidence>
<evidence type="ECO:0000269" key="2">
    <source>
    </source>
</evidence>
<evidence type="ECO:0000305" key="3"/>
<evidence type="ECO:0007829" key="4">
    <source>
        <dbReference type="PDB" id="8EUP"/>
    </source>
</evidence>
<evidence type="ECO:0007829" key="5">
    <source>
        <dbReference type="PDB" id="8EUY"/>
    </source>
</evidence>
<evidence type="ECO:0007829" key="6">
    <source>
        <dbReference type="PDB" id="8EV3"/>
    </source>
</evidence>
<accession>Q10232</accession>
<protein>
    <recommendedName>
        <fullName evidence="3">Large ribosomal subunit protein uL6A</fullName>
    </recommendedName>
    <alternativeName>
        <fullName>60S ribosomal protein L9-A</fullName>
    </alternativeName>
</protein>
<gene>
    <name type="primary">rpl901</name>
    <name type="synonym">rpl9a</name>
    <name type="ORF">SPAC4G9.16c</name>
</gene>
<dbReference type="EMBL" id="CU329670">
    <property type="protein sequence ID" value="CAA93566.1"/>
    <property type="molecule type" value="Genomic_DNA"/>
</dbReference>
<dbReference type="PIR" id="T38875">
    <property type="entry name" value="T38875"/>
</dbReference>
<dbReference type="RefSeq" id="NP_593698.1">
    <property type="nucleotide sequence ID" value="NM_001019130.2"/>
</dbReference>
<dbReference type="PDB" id="8ESQ">
    <property type="method" value="EM"/>
    <property type="resolution" value="2.80 A"/>
    <property type="chains" value="H=1-190"/>
</dbReference>
<dbReference type="PDB" id="8ESR">
    <property type="method" value="EM"/>
    <property type="resolution" value="3.20 A"/>
    <property type="chains" value="H=1-190"/>
</dbReference>
<dbReference type="PDB" id="8ETC">
    <property type="method" value="EM"/>
    <property type="resolution" value="3.10 A"/>
    <property type="chains" value="H=1-190"/>
</dbReference>
<dbReference type="PDB" id="8ETG">
    <property type="method" value="EM"/>
    <property type="resolution" value="3.40 A"/>
    <property type="chains" value="H=1-190"/>
</dbReference>
<dbReference type="PDB" id="8ETH">
    <property type="method" value="EM"/>
    <property type="resolution" value="3.80 A"/>
    <property type="chains" value="H=1-190"/>
</dbReference>
<dbReference type="PDB" id="8ETI">
    <property type="method" value="EM"/>
    <property type="resolution" value="3.70 A"/>
    <property type="chains" value="H=1-190"/>
</dbReference>
<dbReference type="PDB" id="8ETJ">
    <property type="method" value="EM"/>
    <property type="resolution" value="3.20 A"/>
    <property type="chains" value="H=1-190"/>
</dbReference>
<dbReference type="PDB" id="8EUG">
    <property type="method" value="EM"/>
    <property type="resolution" value="2.80 A"/>
    <property type="chains" value="H=1-190"/>
</dbReference>
<dbReference type="PDB" id="8EUI">
    <property type="method" value="EM"/>
    <property type="resolution" value="3.10 A"/>
    <property type="chains" value="H=1-190"/>
</dbReference>
<dbReference type="PDB" id="8EUP">
    <property type="method" value="EM"/>
    <property type="resolution" value="3.10 A"/>
    <property type="chains" value="H=1-190"/>
</dbReference>
<dbReference type="PDB" id="8EUY">
    <property type="method" value="EM"/>
    <property type="resolution" value="3.00 A"/>
    <property type="chains" value="H=1-190"/>
</dbReference>
<dbReference type="PDB" id="8EV3">
    <property type="method" value="EM"/>
    <property type="resolution" value="3.00 A"/>
    <property type="chains" value="H=1-190"/>
</dbReference>
<dbReference type="PDBsum" id="8ESQ"/>
<dbReference type="PDBsum" id="8ESR"/>
<dbReference type="PDBsum" id="8ETC"/>
<dbReference type="PDBsum" id="8ETG"/>
<dbReference type="PDBsum" id="8ETH"/>
<dbReference type="PDBsum" id="8ETI"/>
<dbReference type="PDBsum" id="8ETJ"/>
<dbReference type="PDBsum" id="8EUG"/>
<dbReference type="PDBsum" id="8EUI"/>
<dbReference type="PDBsum" id="8EUP"/>
<dbReference type="PDBsum" id="8EUY"/>
<dbReference type="PDBsum" id="8EV3"/>
<dbReference type="SMR" id="Q10232"/>
<dbReference type="BioGRID" id="279802">
    <property type="interactions" value="58"/>
</dbReference>
<dbReference type="FunCoup" id="Q10232">
    <property type="interactions" value="435"/>
</dbReference>
<dbReference type="STRING" id="284812.Q10232"/>
<dbReference type="iPTMnet" id="Q10232"/>
<dbReference type="PaxDb" id="4896-SPAC4G9.16c.1"/>
<dbReference type="EnsemblFungi" id="SPAC4G9.16c.1">
    <property type="protein sequence ID" value="SPAC4G9.16c.1:pep"/>
    <property type="gene ID" value="SPAC4G9.16c"/>
</dbReference>
<dbReference type="GeneID" id="2543380"/>
<dbReference type="KEGG" id="spo:2543380"/>
<dbReference type="PomBase" id="SPAC4G9.16c">
    <property type="gene designation" value="rpl901"/>
</dbReference>
<dbReference type="VEuPathDB" id="FungiDB:SPAC4G9.16c"/>
<dbReference type="eggNOG" id="KOG3255">
    <property type="taxonomic scope" value="Eukaryota"/>
</dbReference>
<dbReference type="HOGENOM" id="CLU_065464_0_0_1"/>
<dbReference type="InParanoid" id="Q10232"/>
<dbReference type="OMA" id="YAHFPMK"/>
<dbReference type="PhylomeDB" id="Q10232"/>
<dbReference type="Reactome" id="R-SPO-156827">
    <property type="pathway name" value="L13a-mediated translational silencing of Ceruloplasmin expression"/>
</dbReference>
<dbReference type="Reactome" id="R-SPO-1799339">
    <property type="pathway name" value="SRP-dependent cotranslational protein targeting to membrane"/>
</dbReference>
<dbReference type="Reactome" id="R-SPO-72689">
    <property type="pathway name" value="Formation of a pool of free 40S subunits"/>
</dbReference>
<dbReference type="Reactome" id="R-SPO-72706">
    <property type="pathway name" value="GTP hydrolysis and joining of the 60S ribosomal subunit"/>
</dbReference>
<dbReference type="Reactome" id="R-SPO-975956">
    <property type="pathway name" value="Nonsense Mediated Decay (NMD) independent of the Exon Junction Complex (EJC)"/>
</dbReference>
<dbReference type="Reactome" id="R-SPO-975957">
    <property type="pathway name" value="Nonsense Mediated Decay (NMD) enhanced by the Exon Junction Complex (EJC)"/>
</dbReference>
<dbReference type="PRO" id="PR:Q10232"/>
<dbReference type="Proteomes" id="UP000002485">
    <property type="component" value="Chromosome I"/>
</dbReference>
<dbReference type="GO" id="GO:0005829">
    <property type="term" value="C:cytosol"/>
    <property type="evidence" value="ECO:0007005"/>
    <property type="project" value="PomBase"/>
</dbReference>
<dbReference type="GO" id="GO:0022625">
    <property type="term" value="C:cytosolic large ribosomal subunit"/>
    <property type="evidence" value="ECO:0000318"/>
    <property type="project" value="GO_Central"/>
</dbReference>
<dbReference type="GO" id="GO:0005634">
    <property type="term" value="C:nucleus"/>
    <property type="evidence" value="ECO:0007005"/>
    <property type="project" value="PomBase"/>
</dbReference>
<dbReference type="GO" id="GO:0030684">
    <property type="term" value="C:preribosome"/>
    <property type="evidence" value="ECO:0000314"/>
    <property type="project" value="PomBase"/>
</dbReference>
<dbReference type="GO" id="GO:0019843">
    <property type="term" value="F:rRNA binding"/>
    <property type="evidence" value="ECO:0007669"/>
    <property type="project" value="InterPro"/>
</dbReference>
<dbReference type="GO" id="GO:0003735">
    <property type="term" value="F:structural constituent of ribosome"/>
    <property type="evidence" value="ECO:0000318"/>
    <property type="project" value="GO_Central"/>
</dbReference>
<dbReference type="GO" id="GO:0002181">
    <property type="term" value="P:cytoplasmic translation"/>
    <property type="evidence" value="ECO:0000318"/>
    <property type="project" value="GO_Central"/>
</dbReference>
<dbReference type="FunFam" id="3.90.930.12:FF:000003">
    <property type="entry name" value="60S ribosomal protein L9"/>
    <property type="match status" value="1"/>
</dbReference>
<dbReference type="FunFam" id="3.90.930.12:FF:000004">
    <property type="entry name" value="60S ribosomal protein L9"/>
    <property type="match status" value="1"/>
</dbReference>
<dbReference type="Gene3D" id="3.90.930.12">
    <property type="entry name" value="Ribosomal protein L6, alpha-beta domain"/>
    <property type="match status" value="2"/>
</dbReference>
<dbReference type="InterPro" id="IPR000702">
    <property type="entry name" value="Ribosomal_uL6-like"/>
</dbReference>
<dbReference type="InterPro" id="IPR036789">
    <property type="entry name" value="Ribosomal_uL6-like_a/b-dom_sf"/>
</dbReference>
<dbReference type="InterPro" id="IPR020040">
    <property type="entry name" value="Ribosomal_uL6_a/b-dom"/>
</dbReference>
<dbReference type="InterPro" id="IPR002359">
    <property type="entry name" value="Ribosomal_uL6_CS2"/>
</dbReference>
<dbReference type="PANTHER" id="PTHR11655:SF16">
    <property type="entry name" value="60S RIBOSOMAL PROTEIN L9"/>
    <property type="match status" value="1"/>
</dbReference>
<dbReference type="PANTHER" id="PTHR11655">
    <property type="entry name" value="60S/50S RIBOSOMAL PROTEIN L6/L9"/>
    <property type="match status" value="1"/>
</dbReference>
<dbReference type="Pfam" id="PF00347">
    <property type="entry name" value="Ribosomal_L6"/>
    <property type="match status" value="2"/>
</dbReference>
<dbReference type="PIRSF" id="PIRSF002162">
    <property type="entry name" value="Ribosomal_L6"/>
    <property type="match status" value="1"/>
</dbReference>
<dbReference type="SUPFAM" id="SSF56053">
    <property type="entry name" value="Ribosomal protein L6"/>
    <property type="match status" value="2"/>
</dbReference>
<dbReference type="PROSITE" id="PS00700">
    <property type="entry name" value="RIBOSOMAL_L6_2"/>
    <property type="match status" value="1"/>
</dbReference>
<keyword id="KW-0002">3D-structure</keyword>
<keyword id="KW-0963">Cytoplasm</keyword>
<keyword id="KW-0539">Nucleus</keyword>
<keyword id="KW-1185">Reference proteome</keyword>
<keyword id="KW-0687">Ribonucleoprotein</keyword>
<keyword id="KW-0689">Ribosomal protein</keyword>
<name>RL9A_SCHPO</name>
<feature type="chain" id="PRO_0000131109" description="Large ribosomal subunit protein uL6A">
    <location>
        <begin position="1"/>
        <end position="190"/>
    </location>
</feature>
<feature type="strand" evidence="5">
    <location>
        <begin position="9"/>
        <end position="11"/>
    </location>
</feature>
<feature type="strand" evidence="6">
    <location>
        <begin position="17"/>
        <end position="20"/>
    </location>
</feature>
<feature type="helix" evidence="5">
    <location>
        <begin position="22"/>
        <end position="24"/>
    </location>
</feature>
<feature type="strand" evidence="5">
    <location>
        <begin position="26"/>
        <end position="28"/>
    </location>
</feature>
<feature type="strand" evidence="5">
    <location>
        <begin position="35"/>
        <end position="37"/>
    </location>
</feature>
<feature type="strand" evidence="5">
    <location>
        <begin position="45"/>
        <end position="48"/>
    </location>
</feature>
<feature type="strand" evidence="5">
    <location>
        <begin position="53"/>
        <end position="56"/>
    </location>
</feature>
<feature type="helix" evidence="5">
    <location>
        <begin position="62"/>
        <end position="84"/>
    </location>
</feature>
<feature type="strand" evidence="5">
    <location>
        <begin position="87"/>
        <end position="92"/>
    </location>
</feature>
<feature type="strand" evidence="6">
    <location>
        <begin position="95"/>
        <end position="97"/>
    </location>
</feature>
<feature type="strand" evidence="6">
    <location>
        <begin position="100"/>
        <end position="104"/>
    </location>
</feature>
<feature type="turn" evidence="6">
    <location>
        <begin position="105"/>
        <end position="108"/>
    </location>
</feature>
<feature type="strand" evidence="6">
    <location>
        <begin position="109"/>
        <end position="113"/>
    </location>
</feature>
<feature type="helix" evidence="6">
    <location>
        <begin position="115"/>
        <end position="117"/>
    </location>
</feature>
<feature type="strand" evidence="6">
    <location>
        <begin position="122"/>
        <end position="125"/>
    </location>
</feature>
<feature type="strand" evidence="6">
    <location>
        <begin position="130"/>
        <end position="138"/>
    </location>
</feature>
<feature type="strand" evidence="6">
    <location>
        <begin position="141"/>
        <end position="147"/>
    </location>
</feature>
<feature type="helix" evidence="5">
    <location>
        <begin position="149"/>
        <end position="162"/>
    </location>
</feature>
<feature type="strand" evidence="4">
    <location>
        <begin position="166"/>
        <end position="168"/>
    </location>
</feature>
<feature type="turn" evidence="5">
    <location>
        <begin position="170"/>
        <end position="173"/>
    </location>
</feature>
<feature type="strand" evidence="5">
    <location>
        <begin position="177"/>
        <end position="183"/>
    </location>
</feature>
<reference key="1">
    <citation type="journal article" date="2002" name="Nature">
        <title>The genome sequence of Schizosaccharomyces pombe.</title>
        <authorList>
            <person name="Wood V."/>
            <person name="Gwilliam R."/>
            <person name="Rajandream M.A."/>
            <person name="Lyne M.H."/>
            <person name="Lyne R."/>
            <person name="Stewart A."/>
            <person name="Sgouros J.G."/>
            <person name="Peat N."/>
            <person name="Hayles J."/>
            <person name="Baker S.G."/>
            <person name="Basham D."/>
            <person name="Bowman S."/>
            <person name="Brooks K."/>
            <person name="Brown D."/>
            <person name="Brown S."/>
            <person name="Chillingworth T."/>
            <person name="Churcher C.M."/>
            <person name="Collins M."/>
            <person name="Connor R."/>
            <person name="Cronin A."/>
            <person name="Davis P."/>
            <person name="Feltwell T."/>
            <person name="Fraser A."/>
            <person name="Gentles S."/>
            <person name="Goble A."/>
            <person name="Hamlin N."/>
            <person name="Harris D.E."/>
            <person name="Hidalgo J."/>
            <person name="Hodgson G."/>
            <person name="Holroyd S."/>
            <person name="Hornsby T."/>
            <person name="Howarth S."/>
            <person name="Huckle E.J."/>
            <person name="Hunt S."/>
            <person name="Jagels K."/>
            <person name="James K.D."/>
            <person name="Jones L."/>
            <person name="Jones M."/>
            <person name="Leather S."/>
            <person name="McDonald S."/>
            <person name="McLean J."/>
            <person name="Mooney P."/>
            <person name="Moule S."/>
            <person name="Mungall K.L."/>
            <person name="Murphy L.D."/>
            <person name="Niblett D."/>
            <person name="Odell C."/>
            <person name="Oliver K."/>
            <person name="O'Neil S."/>
            <person name="Pearson D."/>
            <person name="Quail M.A."/>
            <person name="Rabbinowitsch E."/>
            <person name="Rutherford K.M."/>
            <person name="Rutter S."/>
            <person name="Saunders D."/>
            <person name="Seeger K."/>
            <person name="Sharp S."/>
            <person name="Skelton J."/>
            <person name="Simmonds M.N."/>
            <person name="Squares R."/>
            <person name="Squares S."/>
            <person name="Stevens K."/>
            <person name="Taylor K."/>
            <person name="Taylor R.G."/>
            <person name="Tivey A."/>
            <person name="Walsh S.V."/>
            <person name="Warren T."/>
            <person name="Whitehead S."/>
            <person name="Woodward J.R."/>
            <person name="Volckaert G."/>
            <person name="Aert R."/>
            <person name="Robben J."/>
            <person name="Grymonprez B."/>
            <person name="Weltjens I."/>
            <person name="Vanstreels E."/>
            <person name="Rieger M."/>
            <person name="Schaefer M."/>
            <person name="Mueller-Auer S."/>
            <person name="Gabel C."/>
            <person name="Fuchs M."/>
            <person name="Duesterhoeft A."/>
            <person name="Fritzc C."/>
            <person name="Holzer E."/>
            <person name="Moestl D."/>
            <person name="Hilbert H."/>
            <person name="Borzym K."/>
            <person name="Langer I."/>
            <person name="Beck A."/>
            <person name="Lehrach H."/>
            <person name="Reinhardt R."/>
            <person name="Pohl T.M."/>
            <person name="Eger P."/>
            <person name="Zimmermann W."/>
            <person name="Wedler H."/>
            <person name="Wambutt R."/>
            <person name="Purnelle B."/>
            <person name="Goffeau A."/>
            <person name="Cadieu E."/>
            <person name="Dreano S."/>
            <person name="Gloux S."/>
            <person name="Lelaure V."/>
            <person name="Mottier S."/>
            <person name="Galibert F."/>
            <person name="Aves S.J."/>
            <person name="Xiang Z."/>
            <person name="Hunt C."/>
            <person name="Moore K."/>
            <person name="Hurst S.M."/>
            <person name="Lucas M."/>
            <person name="Rochet M."/>
            <person name="Gaillardin C."/>
            <person name="Tallada V.A."/>
            <person name="Garzon A."/>
            <person name="Thode G."/>
            <person name="Daga R.R."/>
            <person name="Cruzado L."/>
            <person name="Jimenez J."/>
            <person name="Sanchez M."/>
            <person name="del Rey F."/>
            <person name="Benito J."/>
            <person name="Dominguez A."/>
            <person name="Revuelta J.L."/>
            <person name="Moreno S."/>
            <person name="Armstrong J."/>
            <person name="Forsburg S.L."/>
            <person name="Cerutti L."/>
            <person name="Lowe T."/>
            <person name="McCombie W.R."/>
            <person name="Paulsen I."/>
            <person name="Potashkin J."/>
            <person name="Shpakovski G.V."/>
            <person name="Ussery D."/>
            <person name="Barrell B.G."/>
            <person name="Nurse P."/>
        </authorList>
    </citation>
    <scope>NUCLEOTIDE SEQUENCE [LARGE SCALE GENOMIC DNA]</scope>
    <source>
        <strain>972 / ATCC 24843</strain>
    </source>
</reference>
<reference key="2">
    <citation type="journal article" date="2006" name="Nat. Biotechnol.">
        <title>ORFeome cloning and global analysis of protein localization in the fission yeast Schizosaccharomyces pombe.</title>
        <authorList>
            <person name="Matsuyama A."/>
            <person name="Arai R."/>
            <person name="Yashiroda Y."/>
            <person name="Shirai A."/>
            <person name="Kamata A."/>
            <person name="Sekido S."/>
            <person name="Kobayashi Y."/>
            <person name="Hashimoto A."/>
            <person name="Hamamoto M."/>
            <person name="Hiraoka Y."/>
            <person name="Horinouchi S."/>
            <person name="Yoshida M."/>
        </authorList>
    </citation>
    <scope>SUBCELLULAR LOCATION [LARGE SCALE ANALYSIS]</scope>
</reference>
<organism>
    <name type="scientific">Schizosaccharomyces pombe (strain 972 / ATCC 24843)</name>
    <name type="common">Fission yeast</name>
    <dbReference type="NCBI Taxonomy" id="284812"/>
    <lineage>
        <taxon>Eukaryota</taxon>
        <taxon>Fungi</taxon>
        <taxon>Dikarya</taxon>
        <taxon>Ascomycota</taxon>
        <taxon>Taphrinomycotina</taxon>
        <taxon>Schizosaccharomycetes</taxon>
        <taxon>Schizosaccharomycetales</taxon>
        <taxon>Schizosaccharomycetaceae</taxon>
        <taxon>Schizosaccharomyces</taxon>
    </lineage>
</organism>
<sequence length="190" mass="21513">MGRDIYKDETLTIPKGVTVDIKARNVTVTGPRGTLKQNLRHVDIEMKKQGNTIKFIVWHGSRKHNACIRSVYSIINNMIIGVTQGFRYKMRLVYAHFPININLTENGTVVEIRNFLGERITRVIKCLPGVTVSISSAVKDEIILEGNSLENVSQSAANIKQICNVRNKDIRKFLDGIYVSERGNIEELEE</sequence>
<comment type="function">
    <text evidence="1">Component of the ribosome, a large ribonucleoprotein complex responsible for the synthesis of proteins in the cell. The small ribosomal subunit (SSU) binds messenger RNAs (mRNAs) and translates the encoded message by selecting cognate aminoacyl-transfer RNA (tRNA) molecules. The large subunit (LSU) contains the ribosomal catalytic site termed the peptidyl transferase center (PTC), which catalyzes the formation of peptide bonds, thereby polymerizing the amino acids delivered by tRNAs into a polypeptide chain. The nascent polypeptides leave the ribosome through a tunnel in the LSU and interact with protein factors that function in enzymatic processing, targeting, and the membrane insertion of nascent chains at the exit of the ribosomal tunnel.</text>
</comment>
<comment type="subunit">
    <text evidence="1">Component of the large ribosomal subunit (LSU). Mature yeast ribosomes consist of a small (40S) and a large (60S) subunit. The 40S small subunit contains 1 molecule of ribosomal RNA (18S rRNA) and at least 33 different proteins. The large 60S subunit contains 3 rRNA molecules (25S, 5.8S and 5S rRNA) and at least 46 different proteins. uL6 lines the binding pocket for eukaryotic elongation factor 2 (eEF2).</text>
</comment>
<comment type="subcellular location">
    <subcellularLocation>
        <location evidence="2">Cytoplasm</location>
    </subcellularLocation>
    <subcellularLocation>
        <location evidence="2">Nucleus</location>
    </subcellularLocation>
</comment>
<comment type="miscellaneous">
    <text>There are 2 genes for uL6 in S.pombe.</text>
</comment>
<comment type="similarity">
    <text evidence="3">Belongs to the universal ribosomal protein uL6 family.</text>
</comment>